<feature type="initiator methionine" description="Removed">
    <location>
        <position position="1"/>
    </location>
</feature>
<feature type="chain" id="PRO_0000196307" description="Small, acid-soluble spore protein C1">
    <location>
        <begin position="2"/>
        <end position="59"/>
    </location>
</feature>
<feature type="site" description="Cleavage; by spore protease">
    <location>
        <begin position="19"/>
        <end position="20"/>
    </location>
</feature>
<organism>
    <name type="scientific">Clostridium perfringens (strain 13 / Type A)</name>
    <dbReference type="NCBI Taxonomy" id="195102"/>
    <lineage>
        <taxon>Bacteria</taxon>
        <taxon>Bacillati</taxon>
        <taxon>Bacillota</taxon>
        <taxon>Clostridia</taxon>
        <taxon>Eubacteriales</taxon>
        <taxon>Clostridiaceae</taxon>
        <taxon>Clostridium</taxon>
    </lineage>
</organism>
<reference key="1">
    <citation type="journal article" date="1990" name="Gene">
        <title>Cloning and sequencing of the genes encoding acid-soluble spore proteins from Clostridium perfringens.</title>
        <authorList>
            <person name="Holck A."/>
            <person name="Blom H."/>
            <person name="Granum P.E."/>
        </authorList>
    </citation>
    <scope>NUCLEOTIDE SEQUENCE [GENOMIC DNA]</scope>
    <source>
        <strain>ATCC 12917 / NCTC 8239 / Type A</strain>
    </source>
</reference>
<reference key="2">
    <citation type="journal article" date="1991" name="FEMS Microbiol. Lett.">
        <title>Cloning and nucleotide sequence of three genes coding for small, acid-soluble proteins of Clostridium perfringens spores.</title>
        <authorList>
            <person name="Cabrera-Martinez R.M."/>
            <person name="Setlow P."/>
        </authorList>
    </citation>
    <scope>NUCLEOTIDE SEQUENCE [GENOMIC DNA]</scope>
</reference>
<reference key="3">
    <citation type="journal article" date="2002" name="Proc. Natl. Acad. Sci. U.S.A.">
        <title>Complete genome sequence of Clostridium perfringens, an anaerobic flesh-eater.</title>
        <authorList>
            <person name="Shimizu T."/>
            <person name="Ohtani K."/>
            <person name="Hirakawa H."/>
            <person name="Ohshima K."/>
            <person name="Yamashita A."/>
            <person name="Shiba T."/>
            <person name="Ogasawara N."/>
            <person name="Hattori M."/>
            <person name="Kuhara S."/>
            <person name="Hayashi H."/>
        </authorList>
    </citation>
    <scope>NUCLEOTIDE SEQUENCE [LARGE SCALE GENOMIC DNA]</scope>
    <source>
        <strain>13 / Type A</strain>
    </source>
</reference>
<reference key="4">
    <citation type="journal article" date="1987" name="FEMS Microbiol. Lett.">
        <title>Isolation and amino acid sequence of an acid soluble protein from Clostridium perfringens spores.</title>
        <authorList>
            <person name="Granum P.E."/>
            <person name="Richardson M."/>
            <person name="Blom H."/>
        </authorList>
    </citation>
    <scope>PRELIMINARY PROTEIN SEQUENCE OF 2-59</scope>
</reference>
<keyword id="KW-0903">Direct protein sequencing</keyword>
<keyword id="KW-0238">DNA-binding</keyword>
<keyword id="KW-1185">Reference proteome</keyword>
<keyword id="KW-0749">Sporulation</keyword>
<dbReference type="EMBL" id="M57433">
    <property type="protein sequence ID" value="AAA62757.1"/>
    <property type="molecule type" value="Genomic_DNA"/>
</dbReference>
<dbReference type="EMBL" id="X59481">
    <property type="protein sequence ID" value="CAA42082.1"/>
    <property type="molecule type" value="Genomic_DNA"/>
</dbReference>
<dbReference type="EMBL" id="BA000016">
    <property type="protein sequence ID" value="BAB81770.1"/>
    <property type="molecule type" value="Genomic_DNA"/>
</dbReference>
<dbReference type="PIR" id="JN0082">
    <property type="entry name" value="JN0082"/>
</dbReference>
<dbReference type="RefSeq" id="WP_003451068.1">
    <property type="nucleotide sequence ID" value="NC_003366.1"/>
</dbReference>
<dbReference type="SMR" id="P21886"/>
<dbReference type="STRING" id="195102.gene:10491334"/>
<dbReference type="KEGG" id="cpe:CPE2064"/>
<dbReference type="HOGENOM" id="CLU_169738_2_2_9"/>
<dbReference type="Proteomes" id="UP000000818">
    <property type="component" value="Chromosome"/>
</dbReference>
<dbReference type="GO" id="GO:0003690">
    <property type="term" value="F:double-stranded DNA binding"/>
    <property type="evidence" value="ECO:0007669"/>
    <property type="project" value="InterPro"/>
</dbReference>
<dbReference type="GO" id="GO:0006265">
    <property type="term" value="P:DNA topological change"/>
    <property type="evidence" value="ECO:0007669"/>
    <property type="project" value="InterPro"/>
</dbReference>
<dbReference type="GO" id="GO:0030435">
    <property type="term" value="P:sporulation resulting in formation of a cellular spore"/>
    <property type="evidence" value="ECO:0007669"/>
    <property type="project" value="UniProtKB-KW"/>
</dbReference>
<dbReference type="Gene3D" id="6.10.10.80">
    <property type="entry name" value="Small, acid-soluble spore protein, alpha/beta type-like"/>
    <property type="match status" value="1"/>
</dbReference>
<dbReference type="InterPro" id="IPR001448">
    <property type="entry name" value="SASP_alpha/beta-type"/>
</dbReference>
<dbReference type="InterPro" id="IPR018126">
    <property type="entry name" value="SASP_alpha/beta-type_CS"/>
</dbReference>
<dbReference type="InterPro" id="IPR050847">
    <property type="entry name" value="SASP_DNA-binding"/>
</dbReference>
<dbReference type="InterPro" id="IPR038300">
    <property type="entry name" value="SASP_sf_alpha/beta"/>
</dbReference>
<dbReference type="PANTHER" id="PTHR36107">
    <property type="entry name" value="SMALL, ACID-SOLUBLE SPORE PROTEIN A"/>
    <property type="match status" value="1"/>
</dbReference>
<dbReference type="PANTHER" id="PTHR36107:SF1">
    <property type="entry name" value="SMALL, ACID-SOLUBLE SPORE PROTEIN A"/>
    <property type="match status" value="1"/>
</dbReference>
<dbReference type="Pfam" id="PF00269">
    <property type="entry name" value="SASP"/>
    <property type="match status" value="1"/>
</dbReference>
<dbReference type="PROSITE" id="PS00304">
    <property type="entry name" value="SASP_1"/>
    <property type="match status" value="1"/>
</dbReference>
<dbReference type="PROSITE" id="PS00684">
    <property type="entry name" value="SASP_2"/>
    <property type="match status" value="1"/>
</dbReference>
<evidence type="ECO:0000305" key="1"/>
<proteinExistence type="evidence at protein level"/>
<gene>
    <name type="primary">sspC1</name>
    <name type="synonym">ssp2</name>
    <name type="ordered locus">CPE2064</name>
</gene>
<comment type="function">
    <text>SASP are bound to spore DNA. They are double-stranded DNA-binding proteins that cause DNA to change to an a-like conformation. They protect the DNA backbone from chemical and enzymatic cleavage and are thus involved in dormant spore's high resistance to UV light.</text>
</comment>
<comment type="PTM">
    <text>SASP are degraded in the first minutes of spore germination and provide amino acids for both new protein synthesis and metabolism.</text>
</comment>
<comment type="similarity">
    <text evidence="1">Belongs to the alpha/beta-type SASP family.</text>
</comment>
<accession>P21886</accession>
<accession>P10573</accession>
<protein>
    <recommendedName>
        <fullName>Small, acid-soluble spore protein C1</fullName>
        <shortName>ASSP</shortName>
        <shortName>SASP</shortName>
    </recommendedName>
    <alternativeName>
        <fullName>SSP-2</fullName>
    </alternativeName>
</protein>
<name>SAS1_CLOPE</name>
<sequence>MSQHLVPEAKNGLSKFKNEVAAEMGVPFSDYNGDLSSKQCGSVGGEMVKRMVEQYEKGI</sequence>